<comment type="function">
    <text evidence="1">An essential GTPase that binds both GDP and GTP, with rapid nucleotide exchange. Plays a role in 16S rRNA processing and 30S ribosomal subunit biogenesis and possibly also in cell cycle regulation and energy metabolism.</text>
</comment>
<comment type="subunit">
    <text evidence="1">Monomer.</text>
</comment>
<comment type="subcellular location">
    <subcellularLocation>
        <location>Cytoplasm</location>
    </subcellularLocation>
    <subcellularLocation>
        <location evidence="1">Cell inner membrane</location>
        <topology evidence="1">Peripheral membrane protein</topology>
    </subcellularLocation>
</comment>
<comment type="similarity">
    <text evidence="1 2">Belongs to the TRAFAC class TrmE-Era-EngA-EngB-Septin-like GTPase superfamily. Era GTPase family.</text>
</comment>
<organism>
    <name type="scientific">Geobacter metallireducens (strain ATCC 53774 / DSM 7210 / GS-15)</name>
    <dbReference type="NCBI Taxonomy" id="269799"/>
    <lineage>
        <taxon>Bacteria</taxon>
        <taxon>Pseudomonadati</taxon>
        <taxon>Thermodesulfobacteriota</taxon>
        <taxon>Desulfuromonadia</taxon>
        <taxon>Geobacterales</taxon>
        <taxon>Geobacteraceae</taxon>
        <taxon>Geobacter</taxon>
    </lineage>
</organism>
<proteinExistence type="inferred from homology"/>
<keyword id="KW-0997">Cell inner membrane</keyword>
<keyword id="KW-1003">Cell membrane</keyword>
<keyword id="KW-0963">Cytoplasm</keyword>
<keyword id="KW-0342">GTP-binding</keyword>
<keyword id="KW-0472">Membrane</keyword>
<keyword id="KW-0547">Nucleotide-binding</keyword>
<keyword id="KW-1185">Reference proteome</keyword>
<keyword id="KW-0690">Ribosome biogenesis</keyword>
<keyword id="KW-0694">RNA-binding</keyword>
<keyword id="KW-0699">rRNA-binding</keyword>
<feature type="chain" id="PRO_1000205541" description="GTPase Era">
    <location>
        <begin position="1"/>
        <end position="298"/>
    </location>
</feature>
<feature type="domain" description="Era-type G" evidence="2">
    <location>
        <begin position="7"/>
        <end position="174"/>
    </location>
</feature>
<feature type="domain" description="KH type-2" evidence="1">
    <location>
        <begin position="205"/>
        <end position="283"/>
    </location>
</feature>
<feature type="region of interest" description="G1" evidence="2">
    <location>
        <begin position="15"/>
        <end position="22"/>
    </location>
</feature>
<feature type="region of interest" description="G2" evidence="2">
    <location>
        <begin position="41"/>
        <end position="45"/>
    </location>
</feature>
<feature type="region of interest" description="G3" evidence="2">
    <location>
        <begin position="62"/>
        <end position="65"/>
    </location>
</feature>
<feature type="region of interest" description="G4" evidence="2">
    <location>
        <begin position="124"/>
        <end position="127"/>
    </location>
</feature>
<feature type="region of interest" description="G5" evidence="2">
    <location>
        <begin position="153"/>
        <end position="155"/>
    </location>
</feature>
<feature type="binding site" evidence="1">
    <location>
        <begin position="15"/>
        <end position="22"/>
    </location>
    <ligand>
        <name>GTP</name>
        <dbReference type="ChEBI" id="CHEBI:37565"/>
    </ligand>
</feature>
<feature type="binding site" evidence="1">
    <location>
        <begin position="62"/>
        <end position="66"/>
    </location>
    <ligand>
        <name>GTP</name>
        <dbReference type="ChEBI" id="CHEBI:37565"/>
    </ligand>
</feature>
<feature type="binding site" evidence="1">
    <location>
        <begin position="124"/>
        <end position="127"/>
    </location>
    <ligand>
        <name>GTP</name>
        <dbReference type="ChEBI" id="CHEBI:37565"/>
    </ligand>
</feature>
<gene>
    <name evidence="1" type="primary">era</name>
    <name type="ordered locus">Gmet_2315</name>
</gene>
<protein>
    <recommendedName>
        <fullName evidence="1">GTPase Era</fullName>
    </recommendedName>
</protein>
<reference key="1">
    <citation type="journal article" date="2009" name="BMC Microbiol.">
        <title>The genome sequence of Geobacter metallireducens: features of metabolism, physiology and regulation common and dissimilar to Geobacter sulfurreducens.</title>
        <authorList>
            <person name="Aklujkar M."/>
            <person name="Krushkal J."/>
            <person name="DiBartolo G."/>
            <person name="Lapidus A."/>
            <person name="Land M.L."/>
            <person name="Lovley D.R."/>
        </authorList>
    </citation>
    <scope>NUCLEOTIDE SEQUENCE [LARGE SCALE GENOMIC DNA]</scope>
    <source>
        <strain>ATCC 53774 / DSM 7210 / GS-15</strain>
    </source>
</reference>
<evidence type="ECO:0000255" key="1">
    <source>
        <dbReference type="HAMAP-Rule" id="MF_00367"/>
    </source>
</evidence>
<evidence type="ECO:0000255" key="2">
    <source>
        <dbReference type="PROSITE-ProRule" id="PRU01050"/>
    </source>
</evidence>
<accession>Q39T84</accession>
<dbReference type="EMBL" id="CP000148">
    <property type="protein sequence ID" value="ABB32540.1"/>
    <property type="molecule type" value="Genomic_DNA"/>
</dbReference>
<dbReference type="RefSeq" id="WP_004513305.1">
    <property type="nucleotide sequence ID" value="NC_007517.1"/>
</dbReference>
<dbReference type="SMR" id="Q39T84"/>
<dbReference type="STRING" id="269799.Gmet_2315"/>
<dbReference type="KEGG" id="gme:Gmet_2315"/>
<dbReference type="eggNOG" id="COG1159">
    <property type="taxonomic scope" value="Bacteria"/>
</dbReference>
<dbReference type="HOGENOM" id="CLU_038009_1_0_7"/>
<dbReference type="Proteomes" id="UP000007073">
    <property type="component" value="Chromosome"/>
</dbReference>
<dbReference type="GO" id="GO:0005829">
    <property type="term" value="C:cytosol"/>
    <property type="evidence" value="ECO:0007669"/>
    <property type="project" value="TreeGrafter"/>
</dbReference>
<dbReference type="GO" id="GO:0005886">
    <property type="term" value="C:plasma membrane"/>
    <property type="evidence" value="ECO:0007669"/>
    <property type="project" value="UniProtKB-SubCell"/>
</dbReference>
<dbReference type="GO" id="GO:0005525">
    <property type="term" value="F:GTP binding"/>
    <property type="evidence" value="ECO:0007669"/>
    <property type="project" value="UniProtKB-UniRule"/>
</dbReference>
<dbReference type="GO" id="GO:0003924">
    <property type="term" value="F:GTPase activity"/>
    <property type="evidence" value="ECO:0007669"/>
    <property type="project" value="UniProtKB-UniRule"/>
</dbReference>
<dbReference type="GO" id="GO:0043024">
    <property type="term" value="F:ribosomal small subunit binding"/>
    <property type="evidence" value="ECO:0007669"/>
    <property type="project" value="TreeGrafter"/>
</dbReference>
<dbReference type="GO" id="GO:0070181">
    <property type="term" value="F:small ribosomal subunit rRNA binding"/>
    <property type="evidence" value="ECO:0007669"/>
    <property type="project" value="UniProtKB-UniRule"/>
</dbReference>
<dbReference type="GO" id="GO:0000028">
    <property type="term" value="P:ribosomal small subunit assembly"/>
    <property type="evidence" value="ECO:0007669"/>
    <property type="project" value="TreeGrafter"/>
</dbReference>
<dbReference type="CDD" id="cd04163">
    <property type="entry name" value="Era"/>
    <property type="match status" value="1"/>
</dbReference>
<dbReference type="CDD" id="cd22534">
    <property type="entry name" value="KH-II_Era"/>
    <property type="match status" value="1"/>
</dbReference>
<dbReference type="FunFam" id="3.30.300.20:FF:000003">
    <property type="entry name" value="GTPase Era"/>
    <property type="match status" value="1"/>
</dbReference>
<dbReference type="FunFam" id="3.40.50.300:FF:000094">
    <property type="entry name" value="GTPase Era"/>
    <property type="match status" value="1"/>
</dbReference>
<dbReference type="Gene3D" id="3.30.300.20">
    <property type="match status" value="1"/>
</dbReference>
<dbReference type="Gene3D" id="3.40.50.300">
    <property type="entry name" value="P-loop containing nucleotide triphosphate hydrolases"/>
    <property type="match status" value="1"/>
</dbReference>
<dbReference type="HAMAP" id="MF_00367">
    <property type="entry name" value="GTPase_Era"/>
    <property type="match status" value="1"/>
</dbReference>
<dbReference type="InterPro" id="IPR030388">
    <property type="entry name" value="G_ERA_dom"/>
</dbReference>
<dbReference type="InterPro" id="IPR006073">
    <property type="entry name" value="GTP-bd"/>
</dbReference>
<dbReference type="InterPro" id="IPR005662">
    <property type="entry name" value="GTPase_Era-like"/>
</dbReference>
<dbReference type="InterPro" id="IPR015946">
    <property type="entry name" value="KH_dom-like_a/b"/>
</dbReference>
<dbReference type="InterPro" id="IPR004044">
    <property type="entry name" value="KH_dom_type_2"/>
</dbReference>
<dbReference type="InterPro" id="IPR009019">
    <property type="entry name" value="KH_sf_prok-type"/>
</dbReference>
<dbReference type="InterPro" id="IPR027417">
    <property type="entry name" value="P-loop_NTPase"/>
</dbReference>
<dbReference type="InterPro" id="IPR005225">
    <property type="entry name" value="Small_GTP-bd"/>
</dbReference>
<dbReference type="NCBIfam" id="TIGR00436">
    <property type="entry name" value="era"/>
    <property type="match status" value="1"/>
</dbReference>
<dbReference type="NCBIfam" id="NF000908">
    <property type="entry name" value="PRK00089.1"/>
    <property type="match status" value="1"/>
</dbReference>
<dbReference type="NCBIfam" id="TIGR00231">
    <property type="entry name" value="small_GTP"/>
    <property type="match status" value="1"/>
</dbReference>
<dbReference type="PANTHER" id="PTHR42698">
    <property type="entry name" value="GTPASE ERA"/>
    <property type="match status" value="1"/>
</dbReference>
<dbReference type="PANTHER" id="PTHR42698:SF1">
    <property type="entry name" value="GTPASE ERA, MITOCHONDRIAL"/>
    <property type="match status" value="1"/>
</dbReference>
<dbReference type="Pfam" id="PF07650">
    <property type="entry name" value="KH_2"/>
    <property type="match status" value="1"/>
</dbReference>
<dbReference type="Pfam" id="PF01926">
    <property type="entry name" value="MMR_HSR1"/>
    <property type="match status" value="1"/>
</dbReference>
<dbReference type="PRINTS" id="PR00326">
    <property type="entry name" value="GTP1OBG"/>
</dbReference>
<dbReference type="SUPFAM" id="SSF52540">
    <property type="entry name" value="P-loop containing nucleoside triphosphate hydrolases"/>
    <property type="match status" value="1"/>
</dbReference>
<dbReference type="SUPFAM" id="SSF54814">
    <property type="entry name" value="Prokaryotic type KH domain (KH-domain type II)"/>
    <property type="match status" value="1"/>
</dbReference>
<dbReference type="PROSITE" id="PS51713">
    <property type="entry name" value="G_ERA"/>
    <property type="match status" value="1"/>
</dbReference>
<dbReference type="PROSITE" id="PS50823">
    <property type="entry name" value="KH_TYPE_2"/>
    <property type="match status" value="1"/>
</dbReference>
<name>ERA_GEOMG</name>
<sequence>MSDNPFRSGFVSIIGRPNVGKSTLLNRILGEKIVITSDKPQTTRNRIQGIHNVPGAQIVFIDTPGIHQARSRLNKYMVEVALSAIREVDLVLFLVEANQKPGEQEQEIIDVLAGATAPVFLVINKVDLTEKGAVLERIAAYKDRYPFREIVPISAGTGDGVDHLVELVRKALPQGPVYFPDDILTDVPERFIAAEIIREKVFRMTRDEVPYATAVEVDSFKEREDGGLVSIAATITVERDSQKGIIIGKKGAMLKKIGSAARVEIEKLLNTKVFLELFVRVRKDWSEDERMLKELGYT</sequence>